<name>ALL11_ARAHY</name>
<organism>
    <name type="scientific">Arachis hypogaea</name>
    <name type="common">Peanut</name>
    <dbReference type="NCBI Taxonomy" id="3818"/>
    <lineage>
        <taxon>Eukaryota</taxon>
        <taxon>Viridiplantae</taxon>
        <taxon>Streptophyta</taxon>
        <taxon>Embryophyta</taxon>
        <taxon>Tracheophyta</taxon>
        <taxon>Spermatophyta</taxon>
        <taxon>Magnoliopsida</taxon>
        <taxon>eudicotyledons</taxon>
        <taxon>Gunneridae</taxon>
        <taxon>Pentapetalae</taxon>
        <taxon>rosids</taxon>
        <taxon>fabids</taxon>
        <taxon>Fabales</taxon>
        <taxon>Fabaceae</taxon>
        <taxon>Papilionoideae</taxon>
        <taxon>50 kb inversion clade</taxon>
        <taxon>dalbergioids sensu lato</taxon>
        <taxon>Dalbergieae</taxon>
        <taxon>Pterocarpus clade</taxon>
        <taxon>Arachis</taxon>
    </lineage>
</organism>
<comment type="allergen">
    <text>Causes an allergic reaction in human.</text>
</comment>
<comment type="similarity">
    <text evidence="4">Belongs to the 7S seed storage protein family.</text>
</comment>
<accession>P43237</accession>
<keyword id="KW-0020">Allergen</keyword>
<keyword id="KW-0325">Glycoprotein</keyword>
<keyword id="KW-0732">Signal</keyword>
<protein>
    <recommendedName>
        <fullName>Allergen Ara h 1, clone P17</fullName>
    </recommendedName>
    <alternativeName>
        <fullName>Allergen Ara h I</fullName>
    </alternativeName>
    <allergenName>Ara h 1</allergenName>
</protein>
<reference key="1">
    <citation type="journal article" date="1995" name="J. Clin. Invest.">
        <title>Recombinant peanut allergen Ara h I expression and IgE binding in patients with peanut hypersensitivity.</title>
        <authorList>
            <person name="Burks A.W."/>
            <person name="Cockrell G."/>
            <person name="Stanley J.S."/>
            <person name="Helm R.M."/>
            <person name="Bannon G.A."/>
        </authorList>
    </citation>
    <scope>NUCLEOTIDE SEQUENCE [MRNA]</scope>
    <source>
        <strain>cv. Florunner</strain>
    </source>
</reference>
<reference key="2">
    <citation type="journal article" date="2000" name="Anal. Biochem.">
        <title>N-glycan analysis by matrix-assisted laser desorption/ionization mass spectrometry of electrophoretically separated nonmammalian proteins: application to peanut allergen Ara h 1 and olive pollen allergen Ole e 1.</title>
        <authorList>
            <person name="Kolarich D."/>
            <person name="Altmann F."/>
        </authorList>
    </citation>
    <scope>GLYCOSYLATION AT ASN-516</scope>
</reference>
<proteinExistence type="evidence at protein level"/>
<feature type="signal peptide" evidence="1">
    <location>
        <begin position="1"/>
        <end position="25"/>
    </location>
</feature>
<feature type="chain" id="PRO_0000032196" description="Allergen Ara h 1, clone P17">
    <location>
        <begin position="26"/>
        <end position="614"/>
    </location>
</feature>
<feature type="domain" description="Cupin type-1 1" evidence="1">
    <location>
        <begin position="169"/>
        <end position="327"/>
    </location>
</feature>
<feature type="domain" description="Cupin type-1 2" evidence="1">
    <location>
        <begin position="390"/>
        <end position="566"/>
    </location>
</feature>
<feature type="region of interest" description="Disordered" evidence="2">
    <location>
        <begin position="72"/>
        <end position="177"/>
    </location>
</feature>
<feature type="region of interest" description="Disordered" evidence="2">
    <location>
        <begin position="334"/>
        <end position="356"/>
    </location>
</feature>
<feature type="region of interest" description="Disordered" evidence="2">
    <location>
        <begin position="372"/>
        <end position="397"/>
    </location>
</feature>
<feature type="region of interest" description="Disordered" evidence="2">
    <location>
        <begin position="464"/>
        <end position="491"/>
    </location>
</feature>
<feature type="region of interest" description="Disordered" evidence="2">
    <location>
        <begin position="572"/>
        <end position="614"/>
    </location>
</feature>
<feature type="compositionally biased region" description="Basic and acidic residues" evidence="2">
    <location>
        <begin position="81"/>
        <end position="132"/>
    </location>
</feature>
<feature type="compositionally biased region" description="Basic and acidic residues" evidence="2">
    <location>
        <begin position="464"/>
        <end position="474"/>
    </location>
</feature>
<feature type="compositionally biased region" description="Acidic residues" evidence="2">
    <location>
        <begin position="475"/>
        <end position="486"/>
    </location>
</feature>
<feature type="glycosylation site" id="CAR_000218" description="N-linked (GlcNAc...) asparagine" evidence="3">
    <location>
        <position position="516"/>
    </location>
</feature>
<evidence type="ECO:0000255" key="1"/>
<evidence type="ECO:0000256" key="2">
    <source>
        <dbReference type="SAM" id="MobiDB-lite"/>
    </source>
</evidence>
<evidence type="ECO:0000269" key="3">
    <source>
    </source>
</evidence>
<evidence type="ECO:0000305" key="4"/>
<dbReference type="EMBL" id="L38853">
    <property type="protein sequence ID" value="AAA60336.1"/>
    <property type="molecule type" value="mRNA"/>
</dbReference>
<dbReference type="RefSeq" id="NP_001363136.1">
    <property type="nucleotide sequence ID" value="NM_001376207.1"/>
</dbReference>
<dbReference type="SMR" id="P43237"/>
<dbReference type="IntAct" id="P43237">
    <property type="interactions" value="5"/>
</dbReference>
<dbReference type="Allergome" id="50">
    <property type="allergen name" value="Ara h 1"/>
</dbReference>
<dbReference type="GlyConnect" id="13">
    <property type="glycosylation" value="5 N-Linked glycans (1 site)"/>
</dbReference>
<dbReference type="EnsemblPlants" id="arahy.Tifrunner.gnm2.ann2.Ah09g360700.1">
    <property type="protein sequence ID" value="arahy.Tifrunner.gnm2.ann2.Ah09g360700.1-CDS"/>
    <property type="gene ID" value="arahy.Tifrunner.gnm2.ann2.Ah09g360700"/>
</dbReference>
<dbReference type="GeneID" id="112711772"/>
<dbReference type="Gramene" id="arahy.Tifrunner.gnm2.ann2.Ah09g360700.1">
    <property type="protein sequence ID" value="arahy.Tifrunner.gnm2.ann2.Ah09g360700.1-CDS"/>
    <property type="gene ID" value="arahy.Tifrunner.gnm2.ann2.Ah09g360700"/>
</dbReference>
<dbReference type="OrthoDB" id="1425232at2759"/>
<dbReference type="CDD" id="cd02245">
    <property type="entry name" value="cupin_7S_vicilin-like_C"/>
    <property type="match status" value="1"/>
</dbReference>
<dbReference type="CDD" id="cd02244">
    <property type="entry name" value="cupin_7S_vicilin-like_N"/>
    <property type="match status" value="1"/>
</dbReference>
<dbReference type="FunFam" id="2.60.120.10:FF:000162">
    <property type="entry name" value="Beta-conglycinin beta subunit 1"/>
    <property type="match status" value="1"/>
</dbReference>
<dbReference type="FunFam" id="2.60.120.10:FF:000181">
    <property type="entry name" value="Beta-conglycinin beta subunit 1"/>
    <property type="match status" value="1"/>
</dbReference>
<dbReference type="Gene3D" id="2.60.120.10">
    <property type="entry name" value="Jelly Rolls"/>
    <property type="match status" value="2"/>
</dbReference>
<dbReference type="InterPro" id="IPR006045">
    <property type="entry name" value="Cupin_1"/>
</dbReference>
<dbReference type="InterPro" id="IPR014710">
    <property type="entry name" value="RmlC-like_jellyroll"/>
</dbReference>
<dbReference type="InterPro" id="IPR011051">
    <property type="entry name" value="RmlC_Cupin_sf"/>
</dbReference>
<dbReference type="InterPro" id="IPR050253">
    <property type="entry name" value="Seed_Storage-Functional"/>
</dbReference>
<dbReference type="PANTHER" id="PTHR31189">
    <property type="entry name" value="OS03G0336100 PROTEIN-RELATED"/>
    <property type="match status" value="1"/>
</dbReference>
<dbReference type="PANTHER" id="PTHR31189:SF41">
    <property type="entry name" value="VICILIN C72"/>
    <property type="match status" value="1"/>
</dbReference>
<dbReference type="Pfam" id="PF00190">
    <property type="entry name" value="Cupin_1"/>
    <property type="match status" value="2"/>
</dbReference>
<dbReference type="SMART" id="SM00835">
    <property type="entry name" value="Cupin_1"/>
    <property type="match status" value="2"/>
</dbReference>
<dbReference type="SUPFAM" id="SSF51182">
    <property type="entry name" value="RmlC-like cupins"/>
    <property type="match status" value="2"/>
</dbReference>
<sequence>MRGRVSPLMLLLGILVLASVSATQAKSPYRKTENPCAQRCLQSCQQEPDDLKQKACESRCTKLEYDPRCVYDTGATNQRHPPGERTRGRQPGDYDDDRRQPRREEGGRWGPAEPREREREEDWRQPREDWRRPSHQQPRKIRPEGREGEQEWGTPGSEVREETSRNNPFYFPSRRFSTRYGNQNGRIRVLQRFDQRSKQFQNLQNHRIVQIEARPNTLVLPKHADADNILVIQQGQATVTVANGNNRKSFNLDEGHALRIPSGFISYILNRHDNQNLRVAKISMPVNTPGQFEDFFPASSRDQSSYLQGFSRNTLEAAFNAEFNEIRRVLLEENAGGEQEERGQRRRSTRSSDNEGVIVKVSKEHVQELTKHAKSVSKKGSEEEDITNPINLRDGEPDLSNNFGRLFEVKPDKKNPQLQDLDMMLTCVEIKEGALMLPHFNSKAMVIVVVNKGTGNLELVAVRKEQQQRGRREQEWEEEEEDEEEEGSNREVRRYTARLKEGDVFIMPAAHPVAINASSELHLLGFGINAENNHRIFLAGDKDNVIDQIEKQAKDLAFPGSGEQVEKLIKNQRESHFVSARPQSQSPSSPEKEDQEEENQGGKGPLLSILKAFN</sequence>